<evidence type="ECO:0000255" key="1">
    <source>
        <dbReference type="HAMAP-Rule" id="MF_00144"/>
    </source>
</evidence>
<dbReference type="EC" id="2.8.1.13" evidence="1"/>
<dbReference type="EMBL" id="CP001056">
    <property type="protein sequence ID" value="ACD22606.1"/>
    <property type="molecule type" value="Genomic_DNA"/>
</dbReference>
<dbReference type="SMR" id="B2THM7"/>
<dbReference type="KEGG" id="cbk:CLL_A1171"/>
<dbReference type="PATRIC" id="fig|935198.13.peg.1116"/>
<dbReference type="HOGENOM" id="CLU_035188_0_0_9"/>
<dbReference type="Proteomes" id="UP000001195">
    <property type="component" value="Chromosome"/>
</dbReference>
<dbReference type="GO" id="GO:0005737">
    <property type="term" value="C:cytoplasm"/>
    <property type="evidence" value="ECO:0007669"/>
    <property type="project" value="UniProtKB-SubCell"/>
</dbReference>
<dbReference type="GO" id="GO:0005524">
    <property type="term" value="F:ATP binding"/>
    <property type="evidence" value="ECO:0007669"/>
    <property type="project" value="UniProtKB-KW"/>
</dbReference>
<dbReference type="GO" id="GO:0000049">
    <property type="term" value="F:tRNA binding"/>
    <property type="evidence" value="ECO:0007669"/>
    <property type="project" value="UniProtKB-KW"/>
</dbReference>
<dbReference type="GO" id="GO:0103016">
    <property type="term" value="F:tRNA-uridine 2-sulfurtransferase activity"/>
    <property type="evidence" value="ECO:0007669"/>
    <property type="project" value="UniProtKB-EC"/>
</dbReference>
<dbReference type="GO" id="GO:0002143">
    <property type="term" value="P:tRNA wobble position uridine thiolation"/>
    <property type="evidence" value="ECO:0007669"/>
    <property type="project" value="TreeGrafter"/>
</dbReference>
<dbReference type="CDD" id="cd01998">
    <property type="entry name" value="MnmA_TRMU-like"/>
    <property type="match status" value="1"/>
</dbReference>
<dbReference type="FunFam" id="2.30.30.280:FF:000001">
    <property type="entry name" value="tRNA-specific 2-thiouridylase MnmA"/>
    <property type="match status" value="1"/>
</dbReference>
<dbReference type="FunFam" id="2.40.30.10:FF:000023">
    <property type="entry name" value="tRNA-specific 2-thiouridylase MnmA"/>
    <property type="match status" value="1"/>
</dbReference>
<dbReference type="FunFam" id="3.40.50.620:FF:000115">
    <property type="entry name" value="tRNA-specific 2-thiouridylase MnmA"/>
    <property type="match status" value="1"/>
</dbReference>
<dbReference type="Gene3D" id="2.30.30.280">
    <property type="entry name" value="Adenine nucleotide alpha hydrolases-like domains"/>
    <property type="match status" value="1"/>
</dbReference>
<dbReference type="Gene3D" id="3.40.50.620">
    <property type="entry name" value="HUPs"/>
    <property type="match status" value="1"/>
</dbReference>
<dbReference type="Gene3D" id="2.40.30.10">
    <property type="entry name" value="Translation factors"/>
    <property type="match status" value="1"/>
</dbReference>
<dbReference type="HAMAP" id="MF_00144">
    <property type="entry name" value="tRNA_thiouridyl_MnmA"/>
    <property type="match status" value="1"/>
</dbReference>
<dbReference type="InterPro" id="IPR004506">
    <property type="entry name" value="MnmA-like"/>
</dbReference>
<dbReference type="InterPro" id="IPR046885">
    <property type="entry name" value="MnmA-like_C"/>
</dbReference>
<dbReference type="InterPro" id="IPR046884">
    <property type="entry name" value="MnmA-like_central"/>
</dbReference>
<dbReference type="InterPro" id="IPR023382">
    <property type="entry name" value="MnmA-like_central_sf"/>
</dbReference>
<dbReference type="InterPro" id="IPR014729">
    <property type="entry name" value="Rossmann-like_a/b/a_fold"/>
</dbReference>
<dbReference type="NCBIfam" id="NF001138">
    <property type="entry name" value="PRK00143.1"/>
    <property type="match status" value="1"/>
</dbReference>
<dbReference type="NCBIfam" id="TIGR00420">
    <property type="entry name" value="trmU"/>
    <property type="match status" value="1"/>
</dbReference>
<dbReference type="PANTHER" id="PTHR11933:SF5">
    <property type="entry name" value="MITOCHONDRIAL TRNA-SPECIFIC 2-THIOURIDYLASE 1"/>
    <property type="match status" value="1"/>
</dbReference>
<dbReference type="PANTHER" id="PTHR11933">
    <property type="entry name" value="TRNA 5-METHYLAMINOMETHYL-2-THIOURIDYLATE -METHYLTRANSFERASE"/>
    <property type="match status" value="1"/>
</dbReference>
<dbReference type="Pfam" id="PF03054">
    <property type="entry name" value="tRNA_Me_trans"/>
    <property type="match status" value="1"/>
</dbReference>
<dbReference type="Pfam" id="PF20258">
    <property type="entry name" value="tRNA_Me_trans_C"/>
    <property type="match status" value="1"/>
</dbReference>
<dbReference type="Pfam" id="PF20259">
    <property type="entry name" value="tRNA_Me_trans_M"/>
    <property type="match status" value="1"/>
</dbReference>
<dbReference type="SUPFAM" id="SSF52402">
    <property type="entry name" value="Adenine nucleotide alpha hydrolases-like"/>
    <property type="match status" value="1"/>
</dbReference>
<sequence>MGLTKKKVLVGMSGGVDSSVAAYLLKEQGYEVIGATMQIWQEDKEVEEREGGCCSLSAVEDARRVCDKLDIPFYVLNFRDSFKKKVIEPFIQEYIDGRTPNPCIECNKHLKFDELLRKAQGIGVDYIATGHYAKIDKKDDRYMLIRSDDDRKDQTYALYNFTQDQLAHTLMPCGEYTKDRIREIAKEIGLAVHNKKDSEEICFISDNDHGKYILNAKPGAVKSGNFVDKSGNILGKHKGIVYYTIGQRKGLGLSVGRPVFVTDINPKTNEVVIGAEEDIFKTELIAGDLNFITFDKLEKEIEVEAKIRYSARPGKATIVPLKDGRVKVVFNEKQRAITKGQSVVFYNGNIVIGGGVIEAII</sequence>
<protein>
    <recommendedName>
        <fullName evidence="1">tRNA-specific 2-thiouridylase MnmA</fullName>
        <ecNumber evidence="1">2.8.1.13</ecNumber>
    </recommendedName>
</protein>
<accession>B2THM7</accession>
<proteinExistence type="inferred from homology"/>
<keyword id="KW-0067">ATP-binding</keyword>
<keyword id="KW-0963">Cytoplasm</keyword>
<keyword id="KW-1015">Disulfide bond</keyword>
<keyword id="KW-0547">Nucleotide-binding</keyword>
<keyword id="KW-0694">RNA-binding</keyword>
<keyword id="KW-0808">Transferase</keyword>
<keyword id="KW-0819">tRNA processing</keyword>
<keyword id="KW-0820">tRNA-binding</keyword>
<feature type="chain" id="PRO_0000349587" description="tRNA-specific 2-thiouridylase MnmA">
    <location>
        <begin position="1"/>
        <end position="361"/>
    </location>
</feature>
<feature type="region of interest" description="Interaction with tRNA" evidence="1">
    <location>
        <begin position="152"/>
        <end position="154"/>
    </location>
</feature>
<feature type="region of interest" description="Interaction with tRNA" evidence="1">
    <location>
        <begin position="308"/>
        <end position="309"/>
    </location>
</feature>
<feature type="active site" description="Nucleophile" evidence="1">
    <location>
        <position position="106"/>
    </location>
</feature>
<feature type="active site" description="Cysteine persulfide intermediate" evidence="1">
    <location>
        <position position="202"/>
    </location>
</feature>
<feature type="binding site" evidence="1">
    <location>
        <begin position="11"/>
        <end position="18"/>
    </location>
    <ligand>
        <name>ATP</name>
        <dbReference type="ChEBI" id="CHEBI:30616"/>
    </ligand>
</feature>
<feature type="binding site" evidence="1">
    <location>
        <position position="37"/>
    </location>
    <ligand>
        <name>ATP</name>
        <dbReference type="ChEBI" id="CHEBI:30616"/>
    </ligand>
</feature>
<feature type="binding site" evidence="1">
    <location>
        <position position="130"/>
    </location>
    <ligand>
        <name>ATP</name>
        <dbReference type="ChEBI" id="CHEBI:30616"/>
    </ligand>
</feature>
<feature type="site" description="Interaction with tRNA" evidence="1">
    <location>
        <position position="131"/>
    </location>
</feature>
<feature type="site" description="Interaction with tRNA" evidence="1">
    <location>
        <position position="341"/>
    </location>
</feature>
<feature type="disulfide bond" description="Alternate" evidence="1">
    <location>
        <begin position="106"/>
        <end position="202"/>
    </location>
</feature>
<organism>
    <name type="scientific">Clostridium botulinum (strain Eklund 17B / Type B)</name>
    <dbReference type="NCBI Taxonomy" id="935198"/>
    <lineage>
        <taxon>Bacteria</taxon>
        <taxon>Bacillati</taxon>
        <taxon>Bacillota</taxon>
        <taxon>Clostridia</taxon>
        <taxon>Eubacteriales</taxon>
        <taxon>Clostridiaceae</taxon>
        <taxon>Clostridium</taxon>
    </lineage>
</organism>
<gene>
    <name evidence="1" type="primary">mnmA</name>
    <name type="ordered locus">CLL_A1171</name>
</gene>
<comment type="function">
    <text evidence="1">Catalyzes the 2-thiolation of uridine at the wobble position (U34) of tRNA, leading to the formation of s(2)U34.</text>
</comment>
<comment type="catalytic activity">
    <reaction evidence="1">
        <text>S-sulfanyl-L-cysteinyl-[protein] + uridine(34) in tRNA + AH2 + ATP = 2-thiouridine(34) in tRNA + L-cysteinyl-[protein] + A + AMP + diphosphate + H(+)</text>
        <dbReference type="Rhea" id="RHEA:47032"/>
        <dbReference type="Rhea" id="RHEA-COMP:10131"/>
        <dbReference type="Rhea" id="RHEA-COMP:11726"/>
        <dbReference type="Rhea" id="RHEA-COMP:11727"/>
        <dbReference type="Rhea" id="RHEA-COMP:11728"/>
        <dbReference type="ChEBI" id="CHEBI:13193"/>
        <dbReference type="ChEBI" id="CHEBI:15378"/>
        <dbReference type="ChEBI" id="CHEBI:17499"/>
        <dbReference type="ChEBI" id="CHEBI:29950"/>
        <dbReference type="ChEBI" id="CHEBI:30616"/>
        <dbReference type="ChEBI" id="CHEBI:33019"/>
        <dbReference type="ChEBI" id="CHEBI:61963"/>
        <dbReference type="ChEBI" id="CHEBI:65315"/>
        <dbReference type="ChEBI" id="CHEBI:87170"/>
        <dbReference type="ChEBI" id="CHEBI:456215"/>
        <dbReference type="EC" id="2.8.1.13"/>
    </reaction>
</comment>
<comment type="subcellular location">
    <subcellularLocation>
        <location evidence="1">Cytoplasm</location>
    </subcellularLocation>
</comment>
<comment type="similarity">
    <text evidence="1">Belongs to the MnmA/TRMU family.</text>
</comment>
<reference key="1">
    <citation type="submission" date="2008-04" db="EMBL/GenBank/DDBJ databases">
        <title>Complete sequence of Clostridium botulinum strain Eklund.</title>
        <authorList>
            <person name="Brinkac L.M."/>
            <person name="Brown J.L."/>
            <person name="Bruce D."/>
            <person name="Detter C."/>
            <person name="Munk C."/>
            <person name="Smith L.A."/>
            <person name="Smith T.J."/>
            <person name="Sutton G."/>
            <person name="Brettin T.S."/>
        </authorList>
    </citation>
    <scope>NUCLEOTIDE SEQUENCE [LARGE SCALE GENOMIC DNA]</scope>
    <source>
        <strain>Eklund 17B / Type B</strain>
    </source>
</reference>
<name>MNMA_CLOBB</name>